<organism>
    <name type="scientific">Pseudomonas putida (strain W619)</name>
    <dbReference type="NCBI Taxonomy" id="390235"/>
    <lineage>
        <taxon>Bacteria</taxon>
        <taxon>Pseudomonadati</taxon>
        <taxon>Pseudomonadota</taxon>
        <taxon>Gammaproteobacteria</taxon>
        <taxon>Pseudomonadales</taxon>
        <taxon>Pseudomonadaceae</taxon>
        <taxon>Pseudomonas</taxon>
    </lineage>
</organism>
<name>HEM3_PSEPW</name>
<evidence type="ECO:0000255" key="1">
    <source>
        <dbReference type="HAMAP-Rule" id="MF_00260"/>
    </source>
</evidence>
<protein>
    <recommendedName>
        <fullName evidence="1">Porphobilinogen deaminase</fullName>
        <shortName evidence="1">PBG</shortName>
        <ecNumber evidence="1">2.5.1.61</ecNumber>
    </recommendedName>
    <alternativeName>
        <fullName evidence="1">Hydroxymethylbilane synthase</fullName>
        <shortName evidence="1">HMBS</shortName>
    </alternativeName>
    <alternativeName>
        <fullName evidence="1">Pre-uroporphyrinogen synthase</fullName>
    </alternativeName>
</protein>
<sequence length="313" mass="33409">MSTREIRIATRKSALALWQAEYVKARLEQAHPGLLVTLVPMVSRGDKLLDAPLAKIGGKGLFVKELETALLDNEADIAVHSMKDVPMDFPEGLGLYCICEREDPRDAFVSNRFSSLDALPAGSIVGTSSLRRQAQLLARRPDLQIRFLRGNVNTRLAKLDAGEYDAIILAAAGLIRLGFEERITASISVDDSLPAGGQGAVGIECRSADSEIHALLAPLHHTDTADRVVAERALNKHLNGGCQVPIACYAVLEGEQLWLRGLVGQPSGGTLLMADARAPRASAETLGVQVAEDLLGQGAAAILKEVYGEAGHP</sequence>
<gene>
    <name evidence="1" type="primary">hemC</name>
    <name type="ordered locus">PputW619_0256</name>
</gene>
<accession>B1J1V2</accession>
<reference key="1">
    <citation type="submission" date="2008-02" db="EMBL/GenBank/DDBJ databases">
        <title>Complete sequence of Pseudomonas putida W619.</title>
        <authorList>
            <person name="Copeland A."/>
            <person name="Lucas S."/>
            <person name="Lapidus A."/>
            <person name="Barry K."/>
            <person name="Detter J.C."/>
            <person name="Glavina del Rio T."/>
            <person name="Dalin E."/>
            <person name="Tice H."/>
            <person name="Pitluck S."/>
            <person name="Chain P."/>
            <person name="Malfatti S."/>
            <person name="Shin M."/>
            <person name="Vergez L."/>
            <person name="Schmutz J."/>
            <person name="Larimer F."/>
            <person name="Land M."/>
            <person name="Hauser L."/>
            <person name="Kyrpides N."/>
            <person name="Kim E."/>
            <person name="Taghavi S."/>
            <person name="Vangronsveld D."/>
            <person name="van der Lelie D."/>
            <person name="Richardson P."/>
        </authorList>
    </citation>
    <scope>NUCLEOTIDE SEQUENCE [LARGE SCALE GENOMIC DNA]</scope>
    <source>
        <strain>W619</strain>
    </source>
</reference>
<comment type="function">
    <text evidence="1">Tetrapolymerization of the monopyrrole PBG into the hydroxymethylbilane pre-uroporphyrinogen in several discrete steps.</text>
</comment>
<comment type="catalytic activity">
    <reaction evidence="1">
        <text>4 porphobilinogen + H2O = hydroxymethylbilane + 4 NH4(+)</text>
        <dbReference type="Rhea" id="RHEA:13185"/>
        <dbReference type="ChEBI" id="CHEBI:15377"/>
        <dbReference type="ChEBI" id="CHEBI:28938"/>
        <dbReference type="ChEBI" id="CHEBI:57845"/>
        <dbReference type="ChEBI" id="CHEBI:58126"/>
        <dbReference type="EC" id="2.5.1.61"/>
    </reaction>
</comment>
<comment type="cofactor">
    <cofactor evidence="1">
        <name>dipyrromethane</name>
        <dbReference type="ChEBI" id="CHEBI:60342"/>
    </cofactor>
    <text evidence="1">Binds 1 dipyrromethane group covalently.</text>
</comment>
<comment type="pathway">
    <text evidence="1">Porphyrin-containing compound metabolism; protoporphyrin-IX biosynthesis; coproporphyrinogen-III from 5-aminolevulinate: step 2/4.</text>
</comment>
<comment type="subunit">
    <text evidence="1">Monomer.</text>
</comment>
<comment type="miscellaneous">
    <text evidence="1">The porphobilinogen subunits are added to the dipyrromethane group.</text>
</comment>
<comment type="similarity">
    <text evidence="1">Belongs to the HMBS family.</text>
</comment>
<dbReference type="EC" id="2.5.1.61" evidence="1"/>
<dbReference type="EMBL" id="CP000949">
    <property type="protein sequence ID" value="ACA70762.1"/>
    <property type="molecule type" value="Genomic_DNA"/>
</dbReference>
<dbReference type="SMR" id="B1J1V2"/>
<dbReference type="STRING" id="390235.PputW619_0256"/>
<dbReference type="KEGG" id="ppw:PputW619_0256"/>
<dbReference type="eggNOG" id="COG0181">
    <property type="taxonomic scope" value="Bacteria"/>
</dbReference>
<dbReference type="HOGENOM" id="CLU_019704_0_2_6"/>
<dbReference type="OrthoDB" id="9810298at2"/>
<dbReference type="UniPathway" id="UPA00251">
    <property type="reaction ID" value="UER00319"/>
</dbReference>
<dbReference type="GO" id="GO:0005737">
    <property type="term" value="C:cytoplasm"/>
    <property type="evidence" value="ECO:0007669"/>
    <property type="project" value="TreeGrafter"/>
</dbReference>
<dbReference type="GO" id="GO:0004418">
    <property type="term" value="F:hydroxymethylbilane synthase activity"/>
    <property type="evidence" value="ECO:0007669"/>
    <property type="project" value="UniProtKB-UniRule"/>
</dbReference>
<dbReference type="GO" id="GO:0006782">
    <property type="term" value="P:protoporphyrinogen IX biosynthetic process"/>
    <property type="evidence" value="ECO:0007669"/>
    <property type="project" value="UniProtKB-UniRule"/>
</dbReference>
<dbReference type="CDD" id="cd13646">
    <property type="entry name" value="PBP2_EcHMBS_like"/>
    <property type="match status" value="1"/>
</dbReference>
<dbReference type="FunFam" id="3.30.160.40:FF:000002">
    <property type="entry name" value="Porphobilinogen deaminase"/>
    <property type="match status" value="1"/>
</dbReference>
<dbReference type="FunFam" id="3.40.190.10:FF:000004">
    <property type="entry name" value="Porphobilinogen deaminase"/>
    <property type="match status" value="1"/>
</dbReference>
<dbReference type="FunFam" id="3.40.190.10:FF:000005">
    <property type="entry name" value="Porphobilinogen deaminase"/>
    <property type="match status" value="1"/>
</dbReference>
<dbReference type="Gene3D" id="3.40.190.10">
    <property type="entry name" value="Periplasmic binding protein-like II"/>
    <property type="match status" value="2"/>
</dbReference>
<dbReference type="Gene3D" id="3.30.160.40">
    <property type="entry name" value="Porphobilinogen deaminase, C-terminal domain"/>
    <property type="match status" value="1"/>
</dbReference>
<dbReference type="HAMAP" id="MF_00260">
    <property type="entry name" value="Porphobil_deam"/>
    <property type="match status" value="1"/>
</dbReference>
<dbReference type="InterPro" id="IPR000860">
    <property type="entry name" value="HemC"/>
</dbReference>
<dbReference type="InterPro" id="IPR022419">
    <property type="entry name" value="Porphobilin_deaminase_cofac_BS"/>
</dbReference>
<dbReference type="InterPro" id="IPR022417">
    <property type="entry name" value="Porphobilin_deaminase_N"/>
</dbReference>
<dbReference type="InterPro" id="IPR022418">
    <property type="entry name" value="Porphobilinogen_deaminase_C"/>
</dbReference>
<dbReference type="InterPro" id="IPR036803">
    <property type="entry name" value="Porphobilinogen_deaminase_C_sf"/>
</dbReference>
<dbReference type="NCBIfam" id="TIGR00212">
    <property type="entry name" value="hemC"/>
    <property type="match status" value="1"/>
</dbReference>
<dbReference type="PANTHER" id="PTHR11557">
    <property type="entry name" value="PORPHOBILINOGEN DEAMINASE"/>
    <property type="match status" value="1"/>
</dbReference>
<dbReference type="PANTHER" id="PTHR11557:SF0">
    <property type="entry name" value="PORPHOBILINOGEN DEAMINASE"/>
    <property type="match status" value="1"/>
</dbReference>
<dbReference type="Pfam" id="PF01379">
    <property type="entry name" value="Porphobil_deam"/>
    <property type="match status" value="1"/>
</dbReference>
<dbReference type="Pfam" id="PF03900">
    <property type="entry name" value="Porphobil_deamC"/>
    <property type="match status" value="1"/>
</dbReference>
<dbReference type="PIRSF" id="PIRSF001438">
    <property type="entry name" value="4pyrrol_synth_OHMeBilane_synth"/>
    <property type="match status" value="1"/>
</dbReference>
<dbReference type="PRINTS" id="PR00151">
    <property type="entry name" value="PORPHBDMNASE"/>
</dbReference>
<dbReference type="SUPFAM" id="SSF53850">
    <property type="entry name" value="Periplasmic binding protein-like II"/>
    <property type="match status" value="1"/>
</dbReference>
<dbReference type="SUPFAM" id="SSF54782">
    <property type="entry name" value="Porphobilinogen deaminase (hydroxymethylbilane synthase), C-terminal domain"/>
    <property type="match status" value="1"/>
</dbReference>
<dbReference type="PROSITE" id="PS00533">
    <property type="entry name" value="PORPHOBILINOGEN_DEAM"/>
    <property type="match status" value="1"/>
</dbReference>
<keyword id="KW-0627">Porphyrin biosynthesis</keyword>
<keyword id="KW-0808">Transferase</keyword>
<proteinExistence type="inferred from homology"/>
<feature type="chain" id="PRO_1000114173" description="Porphobilinogen deaminase">
    <location>
        <begin position="1"/>
        <end position="313"/>
    </location>
</feature>
<feature type="modified residue" description="S-(dipyrrolylmethanemethyl)cysteine" evidence="1">
    <location>
        <position position="242"/>
    </location>
</feature>